<comment type="function">
    <text evidence="1">Catalyzes the formation of putrescine from agmatine.</text>
</comment>
<comment type="catalytic activity">
    <reaction evidence="1">
        <text>agmatine + H2O = urea + putrescine</text>
        <dbReference type="Rhea" id="RHEA:13929"/>
        <dbReference type="ChEBI" id="CHEBI:15377"/>
        <dbReference type="ChEBI" id="CHEBI:16199"/>
        <dbReference type="ChEBI" id="CHEBI:58145"/>
        <dbReference type="ChEBI" id="CHEBI:326268"/>
        <dbReference type="EC" id="3.5.3.11"/>
    </reaction>
</comment>
<comment type="cofactor">
    <cofactor evidence="1">
        <name>Mn(2+)</name>
        <dbReference type="ChEBI" id="CHEBI:29035"/>
    </cofactor>
</comment>
<comment type="pathway">
    <text evidence="1">Amine and polyamine biosynthesis; putrescine biosynthesis via agmatine pathway; putrescine from agmatine: step 1/1.</text>
</comment>
<comment type="similarity">
    <text evidence="1">Belongs to the arginase family. Agmatinase subfamily.</text>
</comment>
<proteinExistence type="inferred from homology"/>
<accession>B6I775</accession>
<name>SPEB_ECOSE</name>
<keyword id="KW-0378">Hydrolase</keyword>
<keyword id="KW-0464">Manganese</keyword>
<keyword id="KW-0479">Metal-binding</keyword>
<keyword id="KW-0620">Polyamine biosynthesis</keyword>
<keyword id="KW-0661">Putrescine biosynthesis</keyword>
<keyword id="KW-0745">Spermidine biosynthesis</keyword>
<gene>
    <name evidence="1" type="primary">speB</name>
    <name type="ordered locus">ECSE_3205</name>
</gene>
<dbReference type="EC" id="3.5.3.11" evidence="1"/>
<dbReference type="EMBL" id="AP009240">
    <property type="protein sequence ID" value="BAG78729.1"/>
    <property type="molecule type" value="Genomic_DNA"/>
</dbReference>
<dbReference type="RefSeq" id="WP_000105559.1">
    <property type="nucleotide sequence ID" value="NC_011415.1"/>
</dbReference>
<dbReference type="SMR" id="B6I775"/>
<dbReference type="KEGG" id="ecy:ECSE_3205"/>
<dbReference type="HOGENOM" id="CLU_039478_0_0_6"/>
<dbReference type="UniPathway" id="UPA00534">
    <property type="reaction ID" value="UER00287"/>
</dbReference>
<dbReference type="Proteomes" id="UP000008199">
    <property type="component" value="Chromosome"/>
</dbReference>
<dbReference type="GO" id="GO:0008783">
    <property type="term" value="F:agmatinase activity"/>
    <property type="evidence" value="ECO:0007669"/>
    <property type="project" value="UniProtKB-UniRule"/>
</dbReference>
<dbReference type="GO" id="GO:0030145">
    <property type="term" value="F:manganese ion binding"/>
    <property type="evidence" value="ECO:0007669"/>
    <property type="project" value="InterPro"/>
</dbReference>
<dbReference type="GO" id="GO:0033389">
    <property type="term" value="P:putrescine biosynthetic process from arginine, via agmatine"/>
    <property type="evidence" value="ECO:0007669"/>
    <property type="project" value="TreeGrafter"/>
</dbReference>
<dbReference type="GO" id="GO:0008295">
    <property type="term" value="P:spermidine biosynthetic process"/>
    <property type="evidence" value="ECO:0007669"/>
    <property type="project" value="UniProtKB-UniRule"/>
</dbReference>
<dbReference type="CDD" id="cd11592">
    <property type="entry name" value="Agmatinase_PAH"/>
    <property type="match status" value="1"/>
</dbReference>
<dbReference type="FunFam" id="3.40.800.10:FF:000001">
    <property type="entry name" value="Agmatinase"/>
    <property type="match status" value="1"/>
</dbReference>
<dbReference type="Gene3D" id="3.40.800.10">
    <property type="entry name" value="Ureohydrolase domain"/>
    <property type="match status" value="1"/>
</dbReference>
<dbReference type="HAMAP" id="MF_01418">
    <property type="entry name" value="SpeB"/>
    <property type="match status" value="1"/>
</dbReference>
<dbReference type="InterPro" id="IPR023694">
    <property type="entry name" value="Agmatinase"/>
</dbReference>
<dbReference type="InterPro" id="IPR005925">
    <property type="entry name" value="Agmatinase-rel"/>
</dbReference>
<dbReference type="InterPro" id="IPR006035">
    <property type="entry name" value="Ureohydrolase"/>
</dbReference>
<dbReference type="InterPro" id="IPR023696">
    <property type="entry name" value="Ureohydrolase_dom_sf"/>
</dbReference>
<dbReference type="InterPro" id="IPR020855">
    <property type="entry name" value="Ureohydrolase_Mn_BS"/>
</dbReference>
<dbReference type="NCBIfam" id="TIGR01230">
    <property type="entry name" value="agmatinase"/>
    <property type="match status" value="1"/>
</dbReference>
<dbReference type="NCBIfam" id="NF002564">
    <property type="entry name" value="PRK02190.1"/>
    <property type="match status" value="1"/>
</dbReference>
<dbReference type="PANTHER" id="PTHR11358">
    <property type="entry name" value="ARGINASE/AGMATINASE"/>
    <property type="match status" value="1"/>
</dbReference>
<dbReference type="PANTHER" id="PTHR11358:SF26">
    <property type="entry name" value="GUANIDINO ACID HYDROLASE, MITOCHONDRIAL"/>
    <property type="match status" value="1"/>
</dbReference>
<dbReference type="Pfam" id="PF00491">
    <property type="entry name" value="Arginase"/>
    <property type="match status" value="1"/>
</dbReference>
<dbReference type="PIRSF" id="PIRSF036979">
    <property type="entry name" value="Arginase"/>
    <property type="match status" value="1"/>
</dbReference>
<dbReference type="SUPFAM" id="SSF52768">
    <property type="entry name" value="Arginase/deacetylase"/>
    <property type="match status" value="1"/>
</dbReference>
<dbReference type="PROSITE" id="PS01053">
    <property type="entry name" value="ARGINASE_1"/>
    <property type="match status" value="1"/>
</dbReference>
<dbReference type="PROSITE" id="PS51409">
    <property type="entry name" value="ARGINASE_2"/>
    <property type="match status" value="1"/>
</dbReference>
<reference key="1">
    <citation type="journal article" date="2008" name="DNA Res.">
        <title>Complete genome sequence and comparative analysis of the wild-type commensal Escherichia coli strain SE11 isolated from a healthy adult.</title>
        <authorList>
            <person name="Oshima K."/>
            <person name="Toh H."/>
            <person name="Ogura Y."/>
            <person name="Sasamoto H."/>
            <person name="Morita H."/>
            <person name="Park S.-H."/>
            <person name="Ooka T."/>
            <person name="Iyoda S."/>
            <person name="Taylor T.D."/>
            <person name="Hayashi T."/>
            <person name="Itoh K."/>
            <person name="Hattori M."/>
        </authorList>
    </citation>
    <scope>NUCLEOTIDE SEQUENCE [LARGE SCALE GENOMIC DNA]</scope>
    <source>
        <strain>SE11</strain>
    </source>
</reference>
<evidence type="ECO:0000255" key="1">
    <source>
        <dbReference type="HAMAP-Rule" id="MF_01418"/>
    </source>
</evidence>
<protein>
    <recommendedName>
        <fullName evidence="1">Agmatinase</fullName>
        <ecNumber evidence="1">3.5.3.11</ecNumber>
    </recommendedName>
    <alternativeName>
        <fullName evidence="1">Agmatine ureohydrolase</fullName>
        <shortName evidence="1">AUH</shortName>
    </alternativeName>
</protein>
<sequence length="306" mass="33542">MSTLGHQYDNSLVSNAFGFLRLPMNFQPYDSDADWVITGVPFDMATSGRAGGRHGPAAIRQVSTNLAWEHNRFPWNFDMRERLNVVDCGDLVYAFGDAREMSEKLQAHAEKLLAAGKRMLSFGGDHFVTLPLLRAHAKHFGKMALVHFDAHTDTYANGCEFDHGTMFYTAPKEGLIDPNHSVQIGIRTEFDIDNGFTVLDACQVNDRSVDDVIAQVKQIVGDMPVYLTFDIDCLDPAFAPGTGTPVIGGLTSDRAIKLVRGLKDLNIVGMDVVEVAPAYDQSEITALAAATLALEMLYIQAAKKGE</sequence>
<organism>
    <name type="scientific">Escherichia coli (strain SE11)</name>
    <dbReference type="NCBI Taxonomy" id="409438"/>
    <lineage>
        <taxon>Bacteria</taxon>
        <taxon>Pseudomonadati</taxon>
        <taxon>Pseudomonadota</taxon>
        <taxon>Gammaproteobacteria</taxon>
        <taxon>Enterobacterales</taxon>
        <taxon>Enterobacteriaceae</taxon>
        <taxon>Escherichia</taxon>
    </lineage>
</organism>
<feature type="chain" id="PRO_1000145613" description="Agmatinase">
    <location>
        <begin position="1"/>
        <end position="306"/>
    </location>
</feature>
<feature type="binding site" evidence="1">
    <location>
        <position position="126"/>
    </location>
    <ligand>
        <name>Mn(2+)</name>
        <dbReference type="ChEBI" id="CHEBI:29035"/>
    </ligand>
</feature>
<feature type="binding site" evidence="1">
    <location>
        <position position="149"/>
    </location>
    <ligand>
        <name>Mn(2+)</name>
        <dbReference type="ChEBI" id="CHEBI:29035"/>
    </ligand>
</feature>
<feature type="binding site" evidence="1">
    <location>
        <position position="151"/>
    </location>
    <ligand>
        <name>Mn(2+)</name>
        <dbReference type="ChEBI" id="CHEBI:29035"/>
    </ligand>
</feature>
<feature type="binding site" evidence="1">
    <location>
        <position position="153"/>
    </location>
    <ligand>
        <name>Mn(2+)</name>
        <dbReference type="ChEBI" id="CHEBI:29035"/>
    </ligand>
</feature>
<feature type="binding site" evidence="1">
    <location>
        <position position="230"/>
    </location>
    <ligand>
        <name>Mn(2+)</name>
        <dbReference type="ChEBI" id="CHEBI:29035"/>
    </ligand>
</feature>
<feature type="binding site" evidence="1">
    <location>
        <position position="232"/>
    </location>
    <ligand>
        <name>Mn(2+)</name>
        <dbReference type="ChEBI" id="CHEBI:29035"/>
    </ligand>
</feature>